<reference key="1">
    <citation type="submission" date="2005-09" db="EMBL/GenBank/DDBJ databases">
        <authorList>
            <person name="Mural R.J."/>
            <person name="Istrail S."/>
            <person name="Sutton G.G."/>
            <person name="Florea L."/>
            <person name="Halpern A.L."/>
            <person name="Mobarry C.M."/>
            <person name="Lippert R."/>
            <person name="Walenz B."/>
            <person name="Shatkay H."/>
            <person name="Dew I."/>
            <person name="Miller J.R."/>
            <person name="Flanigan M.J."/>
            <person name="Edwards N.J."/>
            <person name="Bolanos R."/>
            <person name="Fasulo D."/>
            <person name="Halldorsson B.V."/>
            <person name="Hannenhalli S."/>
            <person name="Turner R."/>
            <person name="Yooseph S."/>
            <person name="Lu F."/>
            <person name="Nusskern D.R."/>
            <person name="Shue B.C."/>
            <person name="Zheng X.H."/>
            <person name="Zhong F."/>
            <person name="Delcher A.L."/>
            <person name="Huson D.H."/>
            <person name="Kravitz S.A."/>
            <person name="Mouchard L."/>
            <person name="Reinert K."/>
            <person name="Remington K.A."/>
            <person name="Clark A.G."/>
            <person name="Waterman M.S."/>
            <person name="Eichler E.E."/>
            <person name="Adams M.D."/>
            <person name="Hunkapiller M.W."/>
            <person name="Myers E.W."/>
            <person name="Venter J.C."/>
        </authorList>
    </citation>
    <scope>NUCLEOTIDE SEQUENCE [LARGE SCALE GENOMIC DNA]</scope>
</reference>
<reference key="2">
    <citation type="journal article" date="2004" name="Genome Res.">
        <title>The status, quality, and expansion of the NIH full-length cDNA project: the Mammalian Gene Collection (MGC).</title>
        <authorList>
            <consortium name="The MGC Project Team"/>
        </authorList>
    </citation>
    <scope>NUCLEOTIDE SEQUENCE [LARGE SCALE MRNA] (ISOFORMS 1 AND 2)</scope>
    <source>
        <tissue>Brain</tissue>
        <tissue>Testis</tissue>
    </source>
</reference>
<evidence type="ECO:0000250" key="1">
    <source>
        <dbReference type="UniProtKB" id="Q8BNN1"/>
    </source>
</evidence>
<evidence type="ECO:0000256" key="2">
    <source>
        <dbReference type="SAM" id="MobiDB-lite"/>
    </source>
</evidence>
<evidence type="ECO:0000303" key="3">
    <source>
    </source>
</evidence>
<evidence type="ECO:0000305" key="4"/>
<evidence type="ECO:0000312" key="5">
    <source>
        <dbReference type="HGNC" id="HGNC:28393"/>
    </source>
</evidence>
<feature type="chain" id="PRO_0000297670" description="Spermatogenesis-associated protein 2-like protein">
    <location>
        <begin position="1"/>
        <end position="424"/>
    </location>
</feature>
<feature type="region of interest" description="Disordered" evidence="2">
    <location>
        <begin position="233"/>
        <end position="258"/>
    </location>
</feature>
<feature type="region of interest" description="Disordered" evidence="2">
    <location>
        <begin position="273"/>
        <end position="300"/>
    </location>
</feature>
<feature type="modified residue" description="Phosphoserine" evidence="1">
    <location>
        <position position="327"/>
    </location>
</feature>
<feature type="splice variant" id="VSP_027332" description="In isoform 2." evidence="3">
    <original>VTALPPACQLVQVA</original>
    <variation>LCWSQSAGLCRVHG</variation>
    <location>
        <begin position="139"/>
        <end position="152"/>
    </location>
</feature>
<feature type="splice variant" id="VSP_027333" description="In isoform 2." evidence="3">
    <location>
        <begin position="153"/>
        <end position="424"/>
    </location>
</feature>
<gene>
    <name evidence="5" type="primary">SPATA2L</name>
    <name evidence="5" type="synonym">C16orf76</name>
</gene>
<comment type="interaction">
    <interactant intactId="EBI-2510414">
        <id>Q8IUW3</id>
    </interactant>
    <interactant intactId="EBI-21535880">
        <id>Q92870-2</id>
        <label>APBB2</label>
    </interactant>
    <organismsDiffer>false</organismsDiffer>
    <experiments>3</experiments>
</comment>
<comment type="interaction">
    <interactant intactId="EBI-2510414">
        <id>Q8IUW3</id>
    </interactant>
    <interactant intactId="EBI-1222467">
        <id>P02649</id>
        <label>APOE</label>
    </interactant>
    <organismsDiffer>false</organismsDiffer>
    <experiments>3</experiments>
</comment>
<comment type="interaction">
    <interactant intactId="EBI-2510414">
        <id>Q8IUW3</id>
    </interactant>
    <interactant intactId="EBI-17264467">
        <id>P05067-2</id>
        <label>APP</label>
    </interactant>
    <organismsDiffer>false</organismsDiffer>
    <experiments>3</experiments>
</comment>
<comment type="interaction">
    <interactant intactId="EBI-2510414">
        <id>Q8IUW3</id>
    </interactant>
    <interactant intactId="EBI-930964">
        <id>P54253</id>
        <label>ATXN1</label>
    </interactant>
    <organismsDiffer>false</organismsDiffer>
    <experiments>3</experiments>
</comment>
<comment type="interaction">
    <interactant intactId="EBI-2510414">
        <id>Q8IUW3</id>
    </interactant>
    <interactant intactId="EBI-702390">
        <id>Q9UBB4</id>
        <label>ATXN10</label>
    </interactant>
    <organismsDiffer>false</organismsDiffer>
    <experiments>3</experiments>
</comment>
<comment type="interaction">
    <interactant intactId="EBI-2510414">
        <id>Q8IUW3</id>
    </interactant>
    <interactant intactId="EBI-946046">
        <id>P54252</id>
        <label>ATXN3</label>
    </interactant>
    <organismsDiffer>false</organismsDiffer>
    <experiments>3</experiments>
</comment>
<comment type="interaction">
    <interactant intactId="EBI-2510414">
        <id>Q8IUW3</id>
    </interactant>
    <interactant intactId="EBI-8589586">
        <id>P09172</id>
        <label>DBH</label>
    </interactant>
    <organismsDiffer>false</organismsDiffer>
    <experiments>3</experiments>
</comment>
<comment type="interaction">
    <interactant intactId="EBI-2510414">
        <id>Q8IUW3</id>
    </interactant>
    <interactant intactId="EBI-21603100">
        <id>P26378-2</id>
        <label>ELAVL4</label>
    </interactant>
    <organismsDiffer>false</organismsDiffer>
    <experiments>3</experiments>
</comment>
<comment type="interaction">
    <interactant intactId="EBI-2510414">
        <id>Q8IUW3</id>
    </interactant>
    <interactant intactId="EBI-744302">
        <id>P14136</id>
        <label>GFAP</label>
    </interactant>
    <organismsDiffer>false</organismsDiffer>
    <experiments>3</experiments>
</comment>
<comment type="interaction">
    <interactant intactId="EBI-2510414">
        <id>Q8IUW3</id>
    </interactant>
    <interactant intactId="EBI-401755">
        <id>P62993</id>
        <label>GRB2</label>
    </interactant>
    <organismsDiffer>false</organismsDiffer>
    <experiments>5</experiments>
</comment>
<comment type="interaction">
    <interactant intactId="EBI-2510414">
        <id>Q8IUW3</id>
    </interactant>
    <interactant intactId="EBI-466029">
        <id>P42858</id>
        <label>HTT</label>
    </interactant>
    <organismsDiffer>false</organismsDiffer>
    <experiments>6</experiments>
</comment>
<comment type="interaction">
    <interactant intactId="EBI-2510414">
        <id>Q8IUW3</id>
    </interactant>
    <interactant intactId="EBI-1055254">
        <id>Q8WXH2</id>
        <label>JPH3</label>
    </interactant>
    <organismsDiffer>false</organismsDiffer>
    <experiments>3</experiments>
</comment>
<comment type="interaction">
    <interactant intactId="EBI-2510414">
        <id>Q8IUW3</id>
    </interactant>
    <interactant intactId="EBI-713635">
        <id>O43639</id>
        <label>NCK2</label>
    </interactant>
    <organismsDiffer>false</organismsDiffer>
    <experiments>3</experiments>
</comment>
<comment type="interaction">
    <interactant intactId="EBI-2510414">
        <id>Q8IUW3</id>
    </interactant>
    <interactant intactId="EBI-716486">
        <id>Q92597</id>
        <label>NDRG1</label>
    </interactant>
    <organismsDiffer>false</organismsDiffer>
    <experiments>3</experiments>
</comment>
<comment type="interaction">
    <interactant intactId="EBI-2510414">
        <id>Q8IUW3</id>
    </interactant>
    <interactant intactId="EBI-713665">
        <id>P19404</id>
        <label>NDUFV2</label>
    </interactant>
    <organismsDiffer>false</organismsDiffer>
    <experiments>3</experiments>
</comment>
<comment type="interaction">
    <interactant intactId="EBI-2510414">
        <id>Q8IUW3</id>
    </interactant>
    <interactant intactId="EBI-1391623">
        <id>P29474</id>
        <label>NOS3</label>
    </interactant>
    <organismsDiffer>false</organismsDiffer>
    <experiments>3</experiments>
</comment>
<comment type="interaction">
    <interactant intactId="EBI-2510414">
        <id>Q8IUW3</id>
    </interactant>
    <interactant intactId="EBI-1164361">
        <id>Q99497</id>
        <label>PARK7</label>
    </interactant>
    <organismsDiffer>false</organismsDiffer>
    <experiments>3</experiments>
</comment>
<comment type="interaction">
    <interactant intactId="EBI-2510414">
        <id>Q8IUW3</id>
    </interactant>
    <interactant intactId="EBI-716404">
        <id>P16284</id>
        <label>PECAM1</label>
    </interactant>
    <organismsDiffer>false</organismsDiffer>
    <experiments>3</experiments>
</comment>
<comment type="interaction">
    <interactant intactId="EBI-2510414">
        <id>Q8IUW3</id>
    </interactant>
    <interactant intactId="EBI-21251460">
        <id>O60260-5</id>
        <label>PRKN</label>
    </interactant>
    <organismsDiffer>false</organismsDiffer>
    <experiments>3</experiments>
</comment>
<comment type="interaction">
    <interactant intactId="EBI-2510414">
        <id>Q8IUW3</id>
    </interactant>
    <interactant intactId="EBI-2902553">
        <id>Q9NUW8</id>
        <label>TDP1</label>
    </interactant>
    <organismsDiffer>false</organismsDiffer>
    <experiments>3</experiments>
</comment>
<comment type="alternative products">
    <event type="alternative splicing"/>
    <isoform>
        <id>Q8IUW3-1</id>
        <name>1</name>
        <sequence type="displayed"/>
    </isoform>
    <isoform>
        <id>Q8IUW3-2</id>
        <name>2</name>
        <sequence type="described" ref="VSP_027332 VSP_027333"/>
    </isoform>
</comment>
<comment type="similarity">
    <text evidence="4">Belongs to the SPATA2 family.</text>
</comment>
<name>SPA2L_HUMAN</name>
<dbReference type="EMBL" id="CH471184">
    <property type="protein sequence ID" value="EAW66697.1"/>
    <property type="molecule type" value="Genomic_DNA"/>
</dbReference>
<dbReference type="EMBL" id="CH471184">
    <property type="protein sequence ID" value="EAW66699.1"/>
    <property type="molecule type" value="Genomic_DNA"/>
</dbReference>
<dbReference type="EMBL" id="CH471184">
    <property type="protein sequence ID" value="EAW66698.1"/>
    <property type="molecule type" value="Genomic_DNA"/>
</dbReference>
<dbReference type="EMBL" id="BC027606">
    <property type="protein sequence ID" value="AAH27606.1"/>
    <property type="molecule type" value="mRNA"/>
</dbReference>
<dbReference type="EMBL" id="BC039608">
    <property type="protein sequence ID" value="AAH39608.1"/>
    <property type="molecule type" value="mRNA"/>
</dbReference>
<dbReference type="EMBL" id="BC053588">
    <property type="protein sequence ID" value="AAH53588.1"/>
    <property type="molecule type" value="mRNA"/>
</dbReference>
<dbReference type="CCDS" id="CCDS10985.1">
    <molecule id="Q8IUW3-1"/>
</dbReference>
<dbReference type="RefSeq" id="NP_689552.2">
    <molecule id="Q8IUW3-1"/>
    <property type="nucleotide sequence ID" value="NM_152339.3"/>
</dbReference>
<dbReference type="RefSeq" id="XP_005256336.1">
    <molecule id="Q8IUW3-1"/>
    <property type="nucleotide sequence ID" value="XM_005256279.6"/>
</dbReference>
<dbReference type="RefSeq" id="XP_054235536.1">
    <molecule id="Q8IUW3-1"/>
    <property type="nucleotide sequence ID" value="XM_054379561.1"/>
</dbReference>
<dbReference type="SMR" id="Q8IUW3"/>
<dbReference type="BioGRID" id="125846">
    <property type="interactions" value="12"/>
</dbReference>
<dbReference type="FunCoup" id="Q8IUW3">
    <property type="interactions" value="522"/>
</dbReference>
<dbReference type="IntAct" id="Q8IUW3">
    <property type="interactions" value="29"/>
</dbReference>
<dbReference type="MINT" id="Q8IUW3"/>
<dbReference type="STRING" id="9606.ENSP00000289805"/>
<dbReference type="iPTMnet" id="Q8IUW3"/>
<dbReference type="PhosphoSitePlus" id="Q8IUW3"/>
<dbReference type="BioMuta" id="SPATA2L"/>
<dbReference type="DMDM" id="74727996"/>
<dbReference type="jPOST" id="Q8IUW3"/>
<dbReference type="MassIVE" id="Q8IUW3"/>
<dbReference type="PaxDb" id="9606-ENSP00000289805"/>
<dbReference type="PeptideAtlas" id="Q8IUW3"/>
<dbReference type="ProteomicsDB" id="70615">
    <molecule id="Q8IUW3-1"/>
</dbReference>
<dbReference type="Pumba" id="Q8IUW3"/>
<dbReference type="Antibodypedia" id="30904">
    <property type="antibodies" value="366 antibodies from 20 providers"/>
</dbReference>
<dbReference type="DNASU" id="124044"/>
<dbReference type="Ensembl" id="ENST00000289805.10">
    <molecule id="Q8IUW3-1"/>
    <property type="protein sequence ID" value="ENSP00000289805.5"/>
    <property type="gene ID" value="ENSG00000158792.16"/>
</dbReference>
<dbReference type="Ensembl" id="ENST00000335360.11">
    <molecule id="Q8IUW3-2"/>
    <property type="protein sequence ID" value="ENSP00000334006.7"/>
    <property type="gene ID" value="ENSG00000158792.16"/>
</dbReference>
<dbReference type="GeneID" id="124044"/>
<dbReference type="KEGG" id="hsa:124044"/>
<dbReference type="MANE-Select" id="ENST00000289805.10">
    <property type="protein sequence ID" value="ENSP00000289805.5"/>
    <property type="RefSeq nucleotide sequence ID" value="NM_152339.4"/>
    <property type="RefSeq protein sequence ID" value="NP_689552.2"/>
</dbReference>
<dbReference type="UCSC" id="uc002foj.4">
    <molecule id="Q8IUW3-1"/>
    <property type="organism name" value="human"/>
</dbReference>
<dbReference type="AGR" id="HGNC:28393"/>
<dbReference type="CTD" id="124044"/>
<dbReference type="DisGeNET" id="124044"/>
<dbReference type="GeneCards" id="SPATA2L"/>
<dbReference type="HGNC" id="HGNC:28393">
    <property type="gene designation" value="SPATA2L"/>
</dbReference>
<dbReference type="HPA" id="ENSG00000158792">
    <property type="expression patterns" value="Low tissue specificity"/>
</dbReference>
<dbReference type="neXtProt" id="NX_Q8IUW3"/>
<dbReference type="OpenTargets" id="ENSG00000158792"/>
<dbReference type="PharmGKB" id="PA162404411"/>
<dbReference type="VEuPathDB" id="HostDB:ENSG00000158792"/>
<dbReference type="eggNOG" id="ENOG502S1TH">
    <property type="taxonomic scope" value="Eukaryota"/>
</dbReference>
<dbReference type="GeneTree" id="ENSGT00530000063956"/>
<dbReference type="HOGENOM" id="CLU_047839_0_0_1"/>
<dbReference type="InParanoid" id="Q8IUW3"/>
<dbReference type="OMA" id="LPTCRPG"/>
<dbReference type="OrthoDB" id="9837000at2759"/>
<dbReference type="PAN-GO" id="Q8IUW3">
    <property type="GO annotations" value="1 GO annotation based on evolutionary models"/>
</dbReference>
<dbReference type="PhylomeDB" id="Q8IUW3"/>
<dbReference type="TreeFam" id="TF328840"/>
<dbReference type="PathwayCommons" id="Q8IUW3"/>
<dbReference type="SignaLink" id="Q8IUW3"/>
<dbReference type="BioGRID-ORCS" id="124044">
    <property type="hits" value="17 hits in 1152 CRISPR screens"/>
</dbReference>
<dbReference type="GenomeRNAi" id="124044"/>
<dbReference type="Pharos" id="Q8IUW3">
    <property type="development level" value="Tdark"/>
</dbReference>
<dbReference type="PRO" id="PR:Q8IUW3"/>
<dbReference type="Proteomes" id="UP000005640">
    <property type="component" value="Chromosome 16"/>
</dbReference>
<dbReference type="RNAct" id="Q8IUW3">
    <property type="molecule type" value="protein"/>
</dbReference>
<dbReference type="Bgee" id="ENSG00000158792">
    <property type="expression patterns" value="Expressed in pancreatic ductal cell and 185 other cell types or tissues"/>
</dbReference>
<dbReference type="ExpressionAtlas" id="Q8IUW3">
    <property type="expression patterns" value="baseline and differential"/>
</dbReference>
<dbReference type="GO" id="GO:0005737">
    <property type="term" value="C:cytoplasm"/>
    <property type="evidence" value="ECO:0000318"/>
    <property type="project" value="GO_Central"/>
</dbReference>
<dbReference type="Gene3D" id="1.20.58.2190">
    <property type="match status" value="1"/>
</dbReference>
<dbReference type="InterPro" id="IPR048839">
    <property type="entry name" value="SPATA2_PUB-like"/>
</dbReference>
<dbReference type="PANTHER" id="PTHR15326:SF7">
    <property type="entry name" value="SPERMATOGENESIS-ASSOCIATED PROTEIN 2-LIKE PROTEIN"/>
    <property type="match status" value="1"/>
</dbReference>
<dbReference type="PANTHER" id="PTHR15326">
    <property type="entry name" value="SPERMATOGENESIS-ASSOCIATED PROTEIN 2/TAMOZHENNIC"/>
    <property type="match status" value="1"/>
</dbReference>
<dbReference type="Pfam" id="PF21388">
    <property type="entry name" value="SPATA2_PUB-like"/>
    <property type="match status" value="1"/>
</dbReference>
<organism>
    <name type="scientific">Homo sapiens</name>
    <name type="common">Human</name>
    <dbReference type="NCBI Taxonomy" id="9606"/>
    <lineage>
        <taxon>Eukaryota</taxon>
        <taxon>Metazoa</taxon>
        <taxon>Chordata</taxon>
        <taxon>Craniata</taxon>
        <taxon>Vertebrata</taxon>
        <taxon>Euteleostomi</taxon>
        <taxon>Mammalia</taxon>
        <taxon>Eutheria</taxon>
        <taxon>Euarchontoglires</taxon>
        <taxon>Primates</taxon>
        <taxon>Haplorrhini</taxon>
        <taxon>Catarrhini</taxon>
        <taxon>Hominidae</taxon>
        <taxon>Homo</taxon>
    </lineage>
</organism>
<proteinExistence type="evidence at protein level"/>
<accession>Q8IUW3</accession>
<accession>D3DX85</accession>
<accession>Q8NHV3</accession>
<keyword id="KW-0025">Alternative splicing</keyword>
<keyword id="KW-0597">Phosphoprotein</keyword>
<keyword id="KW-1267">Proteomics identification</keyword>
<keyword id="KW-1185">Reference proteome</keyword>
<protein>
    <recommendedName>
        <fullName evidence="4">Spermatogenesis-associated protein 2-like protein</fullName>
        <shortName evidence="4">SPATA2-like protein</shortName>
    </recommendedName>
</protein>
<sequence>MGSSSLSEDYRQCLERELRRGRAGVCGDPSLRAVLWQILVEDFDLHGALQDDALALLTDGLWGRADLAPALRGLARAFELLELAAVHLYLLPWRKEFTTIKTFSGGYVHVLKGVLSDDLLLKSFQKMGYVRRDSHRLMVTALPPACQLVQVALGCFALRLECEILGEVLAQLGTSVLPAEELLQARRASGDVASCVAWLQQRLAQDEEPPPLPPRGSPAAYRAPLDLYRDLQEDEGSEDASLYGEPSPGPDSPPAELAYRPPLWEQSAKLWGTGGRAWEPPAEELPQASSPPYGALEEGLEPEPSAFSFLSLRRELSRPGDLATPESSAAASPRRIRAEGVPASAYRSVSEPPGYQAHSCLSPGALPTLCCDTCRQLHAAHCAALPACRPGHSLRVLLGDAQRRLWLQRAQMDTLLYNSPGARP</sequence>